<proteinExistence type="inferred from homology"/>
<feature type="chain" id="PRO_0000126181" description="Large ribosomal subunit protein bL36">
    <location>
        <begin position="1"/>
        <end position="37"/>
    </location>
</feature>
<comment type="similarity">
    <text evidence="1">Belongs to the bacterial ribosomal protein bL36 family.</text>
</comment>
<reference key="1">
    <citation type="journal article" date="2011" name="J. Bacteriol.">
        <title>Complete genome sequence and updated annotation of Desulfovibrio alaskensis G20.</title>
        <authorList>
            <person name="Hauser L.J."/>
            <person name="Land M.L."/>
            <person name="Brown S.D."/>
            <person name="Larimer F."/>
            <person name="Keller K.L."/>
            <person name="Rapp-Giles B.J."/>
            <person name="Price M.N."/>
            <person name="Lin M."/>
            <person name="Bruce D.C."/>
            <person name="Detter J.C."/>
            <person name="Tapia R."/>
            <person name="Han C.S."/>
            <person name="Goodwin L.A."/>
            <person name="Cheng J.F."/>
            <person name="Pitluck S."/>
            <person name="Copeland A."/>
            <person name="Lucas S."/>
            <person name="Nolan M."/>
            <person name="Lapidus A.L."/>
            <person name="Palumbo A.V."/>
            <person name="Wall J.D."/>
        </authorList>
    </citation>
    <scope>NUCLEOTIDE SEQUENCE [LARGE SCALE GENOMIC DNA]</scope>
    <source>
        <strain>ATCC BAA-1058 / DSM 17464 / G20</strain>
    </source>
</reference>
<reference key="2">
    <citation type="submission" date="1996-06" db="EMBL/GenBank/DDBJ databases">
        <authorList>
            <person name="English R.S."/>
            <person name="Wall J.D."/>
        </authorList>
    </citation>
    <scope>NUCLEOTIDE SEQUENCE [GENOMIC DNA] OF 1-26</scope>
</reference>
<organism>
    <name type="scientific">Oleidesulfovibrio alaskensis (strain ATCC BAA-1058 / DSM 17464 / G20)</name>
    <name type="common">Desulfovibrio alaskensis</name>
    <dbReference type="NCBI Taxonomy" id="207559"/>
    <lineage>
        <taxon>Bacteria</taxon>
        <taxon>Pseudomonadati</taxon>
        <taxon>Thermodesulfobacteriota</taxon>
        <taxon>Desulfovibrionia</taxon>
        <taxon>Desulfovibrionales</taxon>
        <taxon>Desulfovibrionaceae</taxon>
        <taxon>Oleidesulfovibrio</taxon>
    </lineage>
</organism>
<keyword id="KW-1185">Reference proteome</keyword>
<keyword id="KW-0687">Ribonucleoprotein</keyword>
<keyword id="KW-0689">Ribosomal protein</keyword>
<name>RL36_OLEA2</name>
<accession>Q46501</accession>
<accession>Q30Z64</accession>
<gene>
    <name type="primary">rpmJ</name>
    <name type="ordered locus">Dde_2235</name>
</gene>
<dbReference type="EMBL" id="CP000112">
    <property type="protein sequence ID" value="ABB39032.1"/>
    <property type="molecule type" value="Genomic_DNA"/>
</dbReference>
<dbReference type="EMBL" id="U57079">
    <property type="protein sequence ID" value="AAB01996.1"/>
    <property type="molecule type" value="Genomic_DNA"/>
</dbReference>
<dbReference type="RefSeq" id="WP_011368123.1">
    <property type="nucleotide sequence ID" value="NC_007519.1"/>
</dbReference>
<dbReference type="SMR" id="Q46501"/>
<dbReference type="STRING" id="207559.Dde_2235"/>
<dbReference type="KEGG" id="dde:Dde_2235"/>
<dbReference type="eggNOG" id="COG0257">
    <property type="taxonomic scope" value="Bacteria"/>
</dbReference>
<dbReference type="HOGENOM" id="CLU_135723_6_2_7"/>
<dbReference type="Proteomes" id="UP000002710">
    <property type="component" value="Chromosome"/>
</dbReference>
<dbReference type="GO" id="GO:0005737">
    <property type="term" value="C:cytoplasm"/>
    <property type="evidence" value="ECO:0007669"/>
    <property type="project" value="UniProtKB-ARBA"/>
</dbReference>
<dbReference type="GO" id="GO:1990904">
    <property type="term" value="C:ribonucleoprotein complex"/>
    <property type="evidence" value="ECO:0007669"/>
    <property type="project" value="UniProtKB-KW"/>
</dbReference>
<dbReference type="GO" id="GO:0005840">
    <property type="term" value="C:ribosome"/>
    <property type="evidence" value="ECO:0007669"/>
    <property type="project" value="UniProtKB-KW"/>
</dbReference>
<dbReference type="GO" id="GO:0003735">
    <property type="term" value="F:structural constituent of ribosome"/>
    <property type="evidence" value="ECO:0007669"/>
    <property type="project" value="InterPro"/>
</dbReference>
<dbReference type="GO" id="GO:0006412">
    <property type="term" value="P:translation"/>
    <property type="evidence" value="ECO:0007669"/>
    <property type="project" value="UniProtKB-UniRule"/>
</dbReference>
<dbReference type="HAMAP" id="MF_00251">
    <property type="entry name" value="Ribosomal_bL36"/>
    <property type="match status" value="1"/>
</dbReference>
<dbReference type="InterPro" id="IPR000473">
    <property type="entry name" value="Ribosomal_bL36"/>
</dbReference>
<dbReference type="InterPro" id="IPR035977">
    <property type="entry name" value="Ribosomal_bL36_sp"/>
</dbReference>
<dbReference type="NCBIfam" id="TIGR01022">
    <property type="entry name" value="rpmJ_bact"/>
    <property type="match status" value="1"/>
</dbReference>
<dbReference type="PANTHER" id="PTHR42888">
    <property type="entry name" value="50S RIBOSOMAL PROTEIN L36, CHLOROPLASTIC"/>
    <property type="match status" value="1"/>
</dbReference>
<dbReference type="PANTHER" id="PTHR42888:SF1">
    <property type="entry name" value="LARGE RIBOSOMAL SUBUNIT PROTEIN BL36C"/>
    <property type="match status" value="1"/>
</dbReference>
<dbReference type="Pfam" id="PF00444">
    <property type="entry name" value="Ribosomal_L36"/>
    <property type="match status" value="1"/>
</dbReference>
<dbReference type="SUPFAM" id="SSF57840">
    <property type="entry name" value="Ribosomal protein L36"/>
    <property type="match status" value="1"/>
</dbReference>
<dbReference type="PROSITE" id="PS00828">
    <property type="entry name" value="RIBOSOMAL_L36"/>
    <property type="match status" value="1"/>
</dbReference>
<sequence>MKVRPSVKKVCPKCKVIRRKGVLRVICENPRHKQRQG</sequence>
<evidence type="ECO:0000305" key="1"/>
<protein>
    <recommendedName>
        <fullName evidence="1">Large ribosomal subunit protein bL36</fullName>
    </recommendedName>
    <alternativeName>
        <fullName>50S ribosomal protein L36</fullName>
    </alternativeName>
</protein>